<comment type="function">
    <text evidence="1">Catalyzes the condensation of pantoate with beta-alanine in an ATP-dependent reaction via a pantoyl-adenylate intermediate.</text>
</comment>
<comment type="catalytic activity">
    <reaction evidence="1">
        <text>(R)-pantoate + beta-alanine + ATP = (R)-pantothenate + AMP + diphosphate + H(+)</text>
        <dbReference type="Rhea" id="RHEA:10912"/>
        <dbReference type="ChEBI" id="CHEBI:15378"/>
        <dbReference type="ChEBI" id="CHEBI:15980"/>
        <dbReference type="ChEBI" id="CHEBI:29032"/>
        <dbReference type="ChEBI" id="CHEBI:30616"/>
        <dbReference type="ChEBI" id="CHEBI:33019"/>
        <dbReference type="ChEBI" id="CHEBI:57966"/>
        <dbReference type="ChEBI" id="CHEBI:456215"/>
        <dbReference type="EC" id="6.3.2.1"/>
    </reaction>
</comment>
<comment type="pathway">
    <text evidence="1">Cofactor biosynthesis; (R)-pantothenate biosynthesis; (R)-pantothenate from (R)-pantoate and beta-alanine: step 1/1.</text>
</comment>
<comment type="subunit">
    <text evidence="1">Homodimer.</text>
</comment>
<comment type="subcellular location">
    <subcellularLocation>
        <location evidence="1">Cytoplasm</location>
    </subcellularLocation>
</comment>
<comment type="miscellaneous">
    <text evidence="1">The reaction proceeds by a bi uni uni bi ping pong mechanism.</text>
</comment>
<comment type="similarity">
    <text evidence="1">Belongs to the pantothenate synthetase family.</text>
</comment>
<protein>
    <recommendedName>
        <fullName evidence="1">Pantothenate synthetase</fullName>
        <shortName evidence="1">PS</shortName>
        <ecNumber evidence="1">6.3.2.1</ecNumber>
    </recommendedName>
    <alternativeName>
        <fullName evidence="1">Pantoate--beta-alanine ligase</fullName>
    </alternativeName>
    <alternativeName>
        <fullName evidence="1">Pantoate-activating enzyme</fullName>
    </alternativeName>
</protein>
<evidence type="ECO:0000255" key="1">
    <source>
        <dbReference type="HAMAP-Rule" id="MF_00158"/>
    </source>
</evidence>
<sequence>MLIAHSIADLRSALASRGRPAFVPTMGNLHEGHLSLVRQARTLGDVTVASIFVNRLQFLPHEDFDSYPRTWEADRAQLEVAGCDILFAPREADLYPQAQTFKVQPDPLLADLLEGHFRPGFFTGVCTVVMKLFSAVFGTTGGGTALFGKKDYQQLMVIRRMVEQFALPVDIVAGDTCRAPDGLALSSRNGYLGPAERTKAVELARALRTLSDAALSRPVADWPGLEAAASDALRGQGWQPDYLVVRRRADLQRPDTAPRPGTLVALGAARLGSTRLIDNFEF</sequence>
<name>PANC_PARC0</name>
<feature type="chain" id="PRO_0000305383" description="Pantothenate synthetase">
    <location>
        <begin position="1"/>
        <end position="282"/>
    </location>
</feature>
<feature type="active site" description="Proton donor" evidence="1">
    <location>
        <position position="33"/>
    </location>
</feature>
<feature type="binding site" evidence="1">
    <location>
        <begin position="26"/>
        <end position="33"/>
    </location>
    <ligand>
        <name>ATP</name>
        <dbReference type="ChEBI" id="CHEBI:30616"/>
    </ligand>
</feature>
<feature type="binding site" evidence="1">
    <location>
        <position position="57"/>
    </location>
    <ligand>
        <name>(R)-pantoate</name>
        <dbReference type="ChEBI" id="CHEBI:15980"/>
    </ligand>
</feature>
<feature type="binding site" evidence="1">
    <location>
        <position position="57"/>
    </location>
    <ligand>
        <name>beta-alanine</name>
        <dbReference type="ChEBI" id="CHEBI:57966"/>
    </ligand>
</feature>
<feature type="binding site" evidence="1">
    <location>
        <begin position="148"/>
        <end position="151"/>
    </location>
    <ligand>
        <name>ATP</name>
        <dbReference type="ChEBI" id="CHEBI:30616"/>
    </ligand>
</feature>
<feature type="binding site" evidence="1">
    <location>
        <position position="154"/>
    </location>
    <ligand>
        <name>(R)-pantoate</name>
        <dbReference type="ChEBI" id="CHEBI:15980"/>
    </ligand>
</feature>
<feature type="binding site" evidence="1">
    <location>
        <begin position="185"/>
        <end position="188"/>
    </location>
    <ligand>
        <name>ATP</name>
        <dbReference type="ChEBI" id="CHEBI:30616"/>
    </ligand>
</feature>
<organism>
    <name type="scientific">Paracidovorax citrulli (strain AAC00-1)</name>
    <name type="common">Acidovorax citrulli</name>
    <dbReference type="NCBI Taxonomy" id="397945"/>
    <lineage>
        <taxon>Bacteria</taxon>
        <taxon>Pseudomonadati</taxon>
        <taxon>Pseudomonadota</taxon>
        <taxon>Betaproteobacteria</taxon>
        <taxon>Burkholderiales</taxon>
        <taxon>Comamonadaceae</taxon>
        <taxon>Paracidovorax</taxon>
    </lineage>
</organism>
<reference key="1">
    <citation type="submission" date="2006-12" db="EMBL/GenBank/DDBJ databases">
        <title>Complete sequence of Acidovorax avenae subsp. citrulli AAC00-1.</title>
        <authorList>
            <person name="Copeland A."/>
            <person name="Lucas S."/>
            <person name="Lapidus A."/>
            <person name="Barry K."/>
            <person name="Detter J.C."/>
            <person name="Glavina del Rio T."/>
            <person name="Dalin E."/>
            <person name="Tice H."/>
            <person name="Pitluck S."/>
            <person name="Kiss H."/>
            <person name="Brettin T."/>
            <person name="Bruce D."/>
            <person name="Han C."/>
            <person name="Tapia R."/>
            <person name="Gilna P."/>
            <person name="Schmutz J."/>
            <person name="Larimer F."/>
            <person name="Land M."/>
            <person name="Hauser L."/>
            <person name="Kyrpides N."/>
            <person name="Kim E."/>
            <person name="Stahl D."/>
            <person name="Richardson P."/>
        </authorList>
    </citation>
    <scope>NUCLEOTIDE SEQUENCE [LARGE SCALE GENOMIC DNA]</scope>
    <source>
        <strain>AAC00-1</strain>
    </source>
</reference>
<gene>
    <name evidence="1" type="primary">panC</name>
    <name type="ordered locus">Aave_3853</name>
</gene>
<keyword id="KW-0067">ATP-binding</keyword>
<keyword id="KW-0963">Cytoplasm</keyword>
<keyword id="KW-0436">Ligase</keyword>
<keyword id="KW-0547">Nucleotide-binding</keyword>
<keyword id="KW-0566">Pantothenate biosynthesis</keyword>
<proteinExistence type="inferred from homology"/>
<dbReference type="EC" id="6.3.2.1" evidence="1"/>
<dbReference type="EMBL" id="CP000512">
    <property type="protein sequence ID" value="ABM34398.1"/>
    <property type="molecule type" value="Genomic_DNA"/>
</dbReference>
<dbReference type="RefSeq" id="WP_011796885.1">
    <property type="nucleotide sequence ID" value="NC_008752.1"/>
</dbReference>
<dbReference type="SMR" id="A1TTW0"/>
<dbReference type="STRING" id="397945.Aave_3853"/>
<dbReference type="KEGG" id="aav:Aave_3853"/>
<dbReference type="eggNOG" id="COG0414">
    <property type="taxonomic scope" value="Bacteria"/>
</dbReference>
<dbReference type="HOGENOM" id="CLU_047148_0_0_4"/>
<dbReference type="OrthoDB" id="9773087at2"/>
<dbReference type="UniPathway" id="UPA00028">
    <property type="reaction ID" value="UER00005"/>
</dbReference>
<dbReference type="Proteomes" id="UP000002596">
    <property type="component" value="Chromosome"/>
</dbReference>
<dbReference type="GO" id="GO:0005829">
    <property type="term" value="C:cytosol"/>
    <property type="evidence" value="ECO:0007669"/>
    <property type="project" value="TreeGrafter"/>
</dbReference>
<dbReference type="GO" id="GO:0005524">
    <property type="term" value="F:ATP binding"/>
    <property type="evidence" value="ECO:0007669"/>
    <property type="project" value="UniProtKB-KW"/>
</dbReference>
<dbReference type="GO" id="GO:0004592">
    <property type="term" value="F:pantoate-beta-alanine ligase activity"/>
    <property type="evidence" value="ECO:0007669"/>
    <property type="project" value="UniProtKB-UniRule"/>
</dbReference>
<dbReference type="GO" id="GO:0015940">
    <property type="term" value="P:pantothenate biosynthetic process"/>
    <property type="evidence" value="ECO:0007669"/>
    <property type="project" value="UniProtKB-UniRule"/>
</dbReference>
<dbReference type="CDD" id="cd00560">
    <property type="entry name" value="PanC"/>
    <property type="match status" value="1"/>
</dbReference>
<dbReference type="Gene3D" id="3.40.50.620">
    <property type="entry name" value="HUPs"/>
    <property type="match status" value="1"/>
</dbReference>
<dbReference type="Gene3D" id="3.30.1300.10">
    <property type="entry name" value="Pantoate-beta-alanine ligase, C-terminal domain"/>
    <property type="match status" value="1"/>
</dbReference>
<dbReference type="HAMAP" id="MF_00158">
    <property type="entry name" value="PanC"/>
    <property type="match status" value="1"/>
</dbReference>
<dbReference type="InterPro" id="IPR004821">
    <property type="entry name" value="Cyt_trans-like"/>
</dbReference>
<dbReference type="InterPro" id="IPR003721">
    <property type="entry name" value="Pantoate_ligase"/>
</dbReference>
<dbReference type="InterPro" id="IPR042176">
    <property type="entry name" value="Pantoate_ligase_C"/>
</dbReference>
<dbReference type="InterPro" id="IPR014729">
    <property type="entry name" value="Rossmann-like_a/b/a_fold"/>
</dbReference>
<dbReference type="NCBIfam" id="TIGR00125">
    <property type="entry name" value="cyt_tran_rel"/>
    <property type="match status" value="1"/>
</dbReference>
<dbReference type="NCBIfam" id="TIGR00018">
    <property type="entry name" value="panC"/>
    <property type="match status" value="1"/>
</dbReference>
<dbReference type="PANTHER" id="PTHR21299">
    <property type="entry name" value="CYTIDYLATE KINASE/PANTOATE-BETA-ALANINE LIGASE"/>
    <property type="match status" value="1"/>
</dbReference>
<dbReference type="PANTHER" id="PTHR21299:SF1">
    <property type="entry name" value="PANTOATE--BETA-ALANINE LIGASE"/>
    <property type="match status" value="1"/>
</dbReference>
<dbReference type="Pfam" id="PF02569">
    <property type="entry name" value="Pantoate_ligase"/>
    <property type="match status" value="1"/>
</dbReference>
<dbReference type="SUPFAM" id="SSF52374">
    <property type="entry name" value="Nucleotidylyl transferase"/>
    <property type="match status" value="1"/>
</dbReference>
<accession>A1TTW0</accession>